<keyword id="KW-0687">Ribonucleoprotein</keyword>
<keyword id="KW-0689">Ribosomal protein</keyword>
<accession>B2K3Z7</accession>
<feature type="chain" id="PRO_1000144202" description="Large ribosomal subunit protein uL13">
    <location>
        <begin position="1"/>
        <end position="142"/>
    </location>
</feature>
<sequence>MKTFTAKPETVKRDWYVVDASGKTLGRLATELARRLRGKHKAEYTPHVDTGDYIIVLNAEKVAVTGNKRTDKIYYHHTGFVGGIKQATFEEMIARRPERVIEIAVKGMLPKGPLGRAMYRKLKVYAGTEHNHAAQQPQVLDI</sequence>
<organism>
    <name type="scientific">Yersinia pseudotuberculosis serotype IB (strain PB1/+)</name>
    <dbReference type="NCBI Taxonomy" id="502801"/>
    <lineage>
        <taxon>Bacteria</taxon>
        <taxon>Pseudomonadati</taxon>
        <taxon>Pseudomonadota</taxon>
        <taxon>Gammaproteobacteria</taxon>
        <taxon>Enterobacterales</taxon>
        <taxon>Yersiniaceae</taxon>
        <taxon>Yersinia</taxon>
    </lineage>
</organism>
<evidence type="ECO:0000255" key="1">
    <source>
        <dbReference type="HAMAP-Rule" id="MF_01366"/>
    </source>
</evidence>
<evidence type="ECO:0000305" key="2"/>
<reference key="1">
    <citation type="submission" date="2008-04" db="EMBL/GenBank/DDBJ databases">
        <title>Complete sequence of Yersinia pseudotuberculosis PB1/+.</title>
        <authorList>
            <person name="Copeland A."/>
            <person name="Lucas S."/>
            <person name="Lapidus A."/>
            <person name="Glavina del Rio T."/>
            <person name="Dalin E."/>
            <person name="Tice H."/>
            <person name="Bruce D."/>
            <person name="Goodwin L."/>
            <person name="Pitluck S."/>
            <person name="Munk A.C."/>
            <person name="Brettin T."/>
            <person name="Detter J.C."/>
            <person name="Han C."/>
            <person name="Tapia R."/>
            <person name="Schmutz J."/>
            <person name="Larimer F."/>
            <person name="Land M."/>
            <person name="Hauser L."/>
            <person name="Challacombe J.F."/>
            <person name="Green L."/>
            <person name="Lindler L.E."/>
            <person name="Nikolich M.P."/>
            <person name="Richardson P."/>
        </authorList>
    </citation>
    <scope>NUCLEOTIDE SEQUENCE [LARGE SCALE GENOMIC DNA]</scope>
    <source>
        <strain>PB1/+</strain>
    </source>
</reference>
<comment type="function">
    <text evidence="1">This protein is one of the early assembly proteins of the 50S ribosomal subunit, although it is not seen to bind rRNA by itself. It is important during the early stages of 50S assembly.</text>
</comment>
<comment type="subunit">
    <text evidence="1">Part of the 50S ribosomal subunit.</text>
</comment>
<comment type="similarity">
    <text evidence="1">Belongs to the universal ribosomal protein uL13 family.</text>
</comment>
<gene>
    <name evidence="1" type="primary">rplM</name>
    <name type="ordered locus">YPTS_3693</name>
</gene>
<dbReference type="EMBL" id="CP001048">
    <property type="protein sequence ID" value="ACC90646.1"/>
    <property type="molecule type" value="Genomic_DNA"/>
</dbReference>
<dbReference type="RefSeq" id="WP_002210132.1">
    <property type="nucleotide sequence ID" value="NZ_CP009780.1"/>
</dbReference>
<dbReference type="SMR" id="B2K3Z7"/>
<dbReference type="GeneID" id="96662998"/>
<dbReference type="KEGG" id="ypb:YPTS_3693"/>
<dbReference type="PATRIC" id="fig|502801.10.peg.3151"/>
<dbReference type="GO" id="GO:0022625">
    <property type="term" value="C:cytosolic large ribosomal subunit"/>
    <property type="evidence" value="ECO:0007669"/>
    <property type="project" value="TreeGrafter"/>
</dbReference>
<dbReference type="GO" id="GO:0003729">
    <property type="term" value="F:mRNA binding"/>
    <property type="evidence" value="ECO:0007669"/>
    <property type="project" value="TreeGrafter"/>
</dbReference>
<dbReference type="GO" id="GO:0003735">
    <property type="term" value="F:structural constituent of ribosome"/>
    <property type="evidence" value="ECO:0007669"/>
    <property type="project" value="InterPro"/>
</dbReference>
<dbReference type="GO" id="GO:0017148">
    <property type="term" value="P:negative regulation of translation"/>
    <property type="evidence" value="ECO:0007669"/>
    <property type="project" value="TreeGrafter"/>
</dbReference>
<dbReference type="GO" id="GO:0006412">
    <property type="term" value="P:translation"/>
    <property type="evidence" value="ECO:0007669"/>
    <property type="project" value="UniProtKB-UniRule"/>
</dbReference>
<dbReference type="CDD" id="cd00392">
    <property type="entry name" value="Ribosomal_L13"/>
    <property type="match status" value="1"/>
</dbReference>
<dbReference type="FunFam" id="3.90.1180.10:FF:000001">
    <property type="entry name" value="50S ribosomal protein L13"/>
    <property type="match status" value="1"/>
</dbReference>
<dbReference type="Gene3D" id="3.90.1180.10">
    <property type="entry name" value="Ribosomal protein L13"/>
    <property type="match status" value="1"/>
</dbReference>
<dbReference type="HAMAP" id="MF_01366">
    <property type="entry name" value="Ribosomal_uL13"/>
    <property type="match status" value="1"/>
</dbReference>
<dbReference type="InterPro" id="IPR005822">
    <property type="entry name" value="Ribosomal_uL13"/>
</dbReference>
<dbReference type="InterPro" id="IPR005823">
    <property type="entry name" value="Ribosomal_uL13_bac-type"/>
</dbReference>
<dbReference type="InterPro" id="IPR023563">
    <property type="entry name" value="Ribosomal_uL13_CS"/>
</dbReference>
<dbReference type="InterPro" id="IPR036899">
    <property type="entry name" value="Ribosomal_uL13_sf"/>
</dbReference>
<dbReference type="NCBIfam" id="TIGR01066">
    <property type="entry name" value="rplM_bact"/>
    <property type="match status" value="1"/>
</dbReference>
<dbReference type="PANTHER" id="PTHR11545:SF2">
    <property type="entry name" value="LARGE RIBOSOMAL SUBUNIT PROTEIN UL13M"/>
    <property type="match status" value="1"/>
</dbReference>
<dbReference type="PANTHER" id="PTHR11545">
    <property type="entry name" value="RIBOSOMAL PROTEIN L13"/>
    <property type="match status" value="1"/>
</dbReference>
<dbReference type="Pfam" id="PF00572">
    <property type="entry name" value="Ribosomal_L13"/>
    <property type="match status" value="1"/>
</dbReference>
<dbReference type="PIRSF" id="PIRSF002181">
    <property type="entry name" value="Ribosomal_L13"/>
    <property type="match status" value="1"/>
</dbReference>
<dbReference type="SUPFAM" id="SSF52161">
    <property type="entry name" value="Ribosomal protein L13"/>
    <property type="match status" value="1"/>
</dbReference>
<dbReference type="PROSITE" id="PS00783">
    <property type="entry name" value="RIBOSOMAL_L13"/>
    <property type="match status" value="1"/>
</dbReference>
<name>RL13_YERPB</name>
<proteinExistence type="inferred from homology"/>
<protein>
    <recommendedName>
        <fullName evidence="1">Large ribosomal subunit protein uL13</fullName>
    </recommendedName>
    <alternativeName>
        <fullName evidence="2">50S ribosomal protein L13</fullName>
    </alternativeName>
</protein>